<proteinExistence type="inferred from homology"/>
<keyword id="KW-0687">Ribonucleoprotein</keyword>
<keyword id="KW-0689">Ribosomal protein</keyword>
<keyword id="KW-0694">RNA-binding</keyword>
<keyword id="KW-0699">rRNA-binding</keyword>
<gene>
    <name type="primary">rplV</name>
    <name type="synonym">rpl22</name>
</gene>
<sequence length="91" mass="10165">MNVKAIAKQMPITPRKTRLVADLIRGKNIKEAQAILMFTPKSASPIVLKLLKSAIANATNNFSLDDKNLYVKEIFVNEGLRLTRLFPRAKG</sequence>
<feature type="chain" id="PRO_0000125200" description="Large ribosomal subunit protein uL22">
    <location>
        <begin position="1"/>
        <end position="91" status="greater than"/>
    </location>
</feature>
<feature type="non-terminal residue">
    <location>
        <position position="91"/>
    </location>
</feature>
<protein>
    <recommendedName>
        <fullName evidence="2">Large ribosomal subunit protein uL22</fullName>
    </recommendedName>
    <alternativeName>
        <fullName>50S ribosomal protein L22</fullName>
    </alternativeName>
</protein>
<dbReference type="EMBL" id="L27036">
    <property type="protein sequence ID" value="AAA83947.1"/>
    <property type="molecule type" value="Genomic_DNA"/>
</dbReference>
<dbReference type="SMR" id="Q52094"/>
<dbReference type="GO" id="GO:0022625">
    <property type="term" value="C:cytosolic large ribosomal subunit"/>
    <property type="evidence" value="ECO:0007669"/>
    <property type="project" value="TreeGrafter"/>
</dbReference>
<dbReference type="GO" id="GO:0019843">
    <property type="term" value="F:rRNA binding"/>
    <property type="evidence" value="ECO:0007669"/>
    <property type="project" value="UniProtKB-KW"/>
</dbReference>
<dbReference type="GO" id="GO:0003735">
    <property type="term" value="F:structural constituent of ribosome"/>
    <property type="evidence" value="ECO:0007669"/>
    <property type="project" value="InterPro"/>
</dbReference>
<dbReference type="GO" id="GO:0006412">
    <property type="term" value="P:translation"/>
    <property type="evidence" value="ECO:0007669"/>
    <property type="project" value="InterPro"/>
</dbReference>
<dbReference type="CDD" id="cd00336">
    <property type="entry name" value="Ribosomal_L22"/>
    <property type="match status" value="1"/>
</dbReference>
<dbReference type="Gene3D" id="3.90.470.10">
    <property type="entry name" value="Ribosomal protein L22/L17"/>
    <property type="match status" value="1"/>
</dbReference>
<dbReference type="InterPro" id="IPR001063">
    <property type="entry name" value="Ribosomal_uL22"/>
</dbReference>
<dbReference type="InterPro" id="IPR005727">
    <property type="entry name" value="Ribosomal_uL22_bac/chlpt-type"/>
</dbReference>
<dbReference type="InterPro" id="IPR047867">
    <property type="entry name" value="Ribosomal_uL22_bac/org-type"/>
</dbReference>
<dbReference type="InterPro" id="IPR036394">
    <property type="entry name" value="Ribosomal_uL22_sf"/>
</dbReference>
<dbReference type="NCBIfam" id="TIGR01044">
    <property type="entry name" value="rplV_bact"/>
    <property type="match status" value="1"/>
</dbReference>
<dbReference type="PANTHER" id="PTHR13501">
    <property type="entry name" value="CHLOROPLAST 50S RIBOSOMAL PROTEIN L22-RELATED"/>
    <property type="match status" value="1"/>
</dbReference>
<dbReference type="PANTHER" id="PTHR13501:SF8">
    <property type="entry name" value="LARGE RIBOSOMAL SUBUNIT PROTEIN UL22M"/>
    <property type="match status" value="1"/>
</dbReference>
<dbReference type="Pfam" id="PF00237">
    <property type="entry name" value="Ribosomal_L22"/>
    <property type="match status" value="1"/>
</dbReference>
<dbReference type="SUPFAM" id="SSF54843">
    <property type="entry name" value="Ribosomal protein L22"/>
    <property type="match status" value="1"/>
</dbReference>
<evidence type="ECO:0000250" key="1"/>
<evidence type="ECO:0000305" key="2"/>
<organism>
    <name type="scientific">Pigeon pea witches'-broom phytoplasma</name>
    <dbReference type="NCBI Taxonomy" id="37700"/>
    <lineage>
        <taxon>Bacteria</taxon>
        <taxon>Bacillati</taxon>
        <taxon>Mycoplasmatota</taxon>
        <taxon>Mollicutes</taxon>
        <taxon>Acholeplasmatales</taxon>
        <taxon>Acholeplasmataceae</taxon>
        <taxon>Candidatus Phytoplasma</taxon>
        <taxon>16SrIX (Pigeon pea witches'-broom group)</taxon>
    </lineage>
</organism>
<accession>Q52094</accession>
<reference key="1">
    <citation type="journal article" date="1994" name="J. Bacteriol.">
        <title>Phylogeny of mycoplasmalike organisms (phytoplasmas): a basis for their classification.</title>
        <authorList>
            <person name="Gundersen D.E."/>
            <person name="Lee I.M."/>
            <person name="Rehner S.A."/>
            <person name="Davis R.E."/>
            <person name="Kingsbury D.T."/>
        </authorList>
    </citation>
    <scope>NUCLEOTIDE SEQUENCE [GENOMIC DNA]</scope>
</reference>
<comment type="function">
    <text evidence="1">This protein binds specifically to 23S rRNA; its binding is stimulated by other ribosomal proteins, e.g. L4, L17, and L20. It is important during the early stages of 50S assembly. It makes multiple contacts with different domains of the 23S rRNA in the assembled 50S subunit and ribosome (By similarity).</text>
</comment>
<comment type="function">
    <text evidence="1">The globular domain of the protein is located near the polypeptide exit tunnel on the outside of the subunit, while an extended beta-hairpin is found that lines the wall of the exit tunnel in the center of the 70S ribosome.</text>
</comment>
<comment type="subunit">
    <text evidence="1">Part of the 50S ribosomal subunit.</text>
</comment>
<comment type="similarity">
    <text evidence="2">Belongs to the universal ribosomal protein uL22 family.</text>
</comment>
<name>RL22_PPWBP</name>